<comment type="function">
    <text evidence="1">Involved in the biosynthesis of isopentenyl diphosphate (IPP) and dimethylallyl diphosphate (DMAPP), two major building blocks of isoprenoid compounds. Catalyzes the conversion of 4-diphosphocytidyl-2-C-methyl-D-erythritol 2-phosphate (CDP-ME2P) to 2-C-methyl-D-erythritol 2,4-cyclodiphosphate (ME-CPP) with a corresponding release of cytidine 5-monophosphate (CMP).</text>
</comment>
<comment type="catalytic activity">
    <reaction evidence="1">
        <text>4-CDP-2-C-methyl-D-erythritol 2-phosphate = 2-C-methyl-D-erythritol 2,4-cyclic diphosphate + CMP</text>
        <dbReference type="Rhea" id="RHEA:23864"/>
        <dbReference type="ChEBI" id="CHEBI:57919"/>
        <dbReference type="ChEBI" id="CHEBI:58483"/>
        <dbReference type="ChEBI" id="CHEBI:60377"/>
        <dbReference type="EC" id="4.6.1.12"/>
    </reaction>
</comment>
<comment type="cofactor">
    <cofactor evidence="1">
        <name>a divalent metal cation</name>
        <dbReference type="ChEBI" id="CHEBI:60240"/>
    </cofactor>
    <text evidence="1">Binds 1 divalent metal cation per subunit.</text>
</comment>
<comment type="pathway">
    <text evidence="1">Isoprenoid biosynthesis; isopentenyl diphosphate biosynthesis via DXP pathway; isopentenyl diphosphate from 1-deoxy-D-xylulose 5-phosphate: step 4/6.</text>
</comment>
<comment type="subunit">
    <text evidence="1">Homotrimer.</text>
</comment>
<comment type="similarity">
    <text evidence="1">Belongs to the IspF family.</text>
</comment>
<organism>
    <name type="scientific">Pseudomonas putida (strain ATCC 700007 / DSM 6899 / JCM 31910 / BCRC 17059 / LMG 24140 / F1)</name>
    <dbReference type="NCBI Taxonomy" id="351746"/>
    <lineage>
        <taxon>Bacteria</taxon>
        <taxon>Pseudomonadati</taxon>
        <taxon>Pseudomonadota</taxon>
        <taxon>Gammaproteobacteria</taxon>
        <taxon>Pseudomonadales</taxon>
        <taxon>Pseudomonadaceae</taxon>
        <taxon>Pseudomonas</taxon>
    </lineage>
</organism>
<evidence type="ECO:0000255" key="1">
    <source>
        <dbReference type="HAMAP-Rule" id="MF_00107"/>
    </source>
</evidence>
<keyword id="KW-0414">Isoprene biosynthesis</keyword>
<keyword id="KW-0456">Lyase</keyword>
<keyword id="KW-0479">Metal-binding</keyword>
<accession>A5W823</accession>
<protein>
    <recommendedName>
        <fullName evidence="1">2-C-methyl-D-erythritol 2,4-cyclodiphosphate synthase</fullName>
        <shortName evidence="1">MECDP-synthase</shortName>
        <shortName evidence="1">MECPP-synthase</shortName>
        <shortName evidence="1">MECPS</shortName>
        <ecNumber evidence="1">4.6.1.12</ecNumber>
    </recommendedName>
</protein>
<proteinExistence type="inferred from homology"/>
<reference key="1">
    <citation type="submission" date="2007-05" db="EMBL/GenBank/DDBJ databases">
        <title>Complete sequence of Pseudomonas putida F1.</title>
        <authorList>
            <consortium name="US DOE Joint Genome Institute"/>
            <person name="Copeland A."/>
            <person name="Lucas S."/>
            <person name="Lapidus A."/>
            <person name="Barry K."/>
            <person name="Detter J.C."/>
            <person name="Glavina del Rio T."/>
            <person name="Hammon N."/>
            <person name="Israni S."/>
            <person name="Dalin E."/>
            <person name="Tice H."/>
            <person name="Pitluck S."/>
            <person name="Chain P."/>
            <person name="Malfatti S."/>
            <person name="Shin M."/>
            <person name="Vergez L."/>
            <person name="Schmutz J."/>
            <person name="Larimer F."/>
            <person name="Land M."/>
            <person name="Hauser L."/>
            <person name="Kyrpides N."/>
            <person name="Lykidis A."/>
            <person name="Parales R."/>
            <person name="Richardson P."/>
        </authorList>
    </citation>
    <scope>NUCLEOTIDE SEQUENCE [LARGE SCALE GENOMIC DNA]</scope>
    <source>
        <strain>ATCC 700007 / DSM 6899 / JCM 31910 / BCRC 17059 / LMG 24140 / F1</strain>
    </source>
</reference>
<dbReference type="EC" id="4.6.1.12" evidence="1"/>
<dbReference type="EMBL" id="CP000712">
    <property type="protein sequence ID" value="ABQ80283.1"/>
    <property type="molecule type" value="Genomic_DNA"/>
</dbReference>
<dbReference type="SMR" id="A5W823"/>
<dbReference type="KEGG" id="ppf:Pput_4159"/>
<dbReference type="eggNOG" id="COG0245">
    <property type="taxonomic scope" value="Bacteria"/>
</dbReference>
<dbReference type="HOGENOM" id="CLU_084630_2_0_6"/>
<dbReference type="UniPathway" id="UPA00056">
    <property type="reaction ID" value="UER00095"/>
</dbReference>
<dbReference type="GO" id="GO:0008685">
    <property type="term" value="F:2-C-methyl-D-erythritol 2,4-cyclodiphosphate synthase activity"/>
    <property type="evidence" value="ECO:0007669"/>
    <property type="project" value="UniProtKB-UniRule"/>
</dbReference>
<dbReference type="GO" id="GO:0046872">
    <property type="term" value="F:metal ion binding"/>
    <property type="evidence" value="ECO:0007669"/>
    <property type="project" value="UniProtKB-KW"/>
</dbReference>
<dbReference type="GO" id="GO:0019288">
    <property type="term" value="P:isopentenyl diphosphate biosynthetic process, methylerythritol 4-phosphate pathway"/>
    <property type="evidence" value="ECO:0007669"/>
    <property type="project" value="UniProtKB-UniRule"/>
</dbReference>
<dbReference type="GO" id="GO:0016114">
    <property type="term" value="P:terpenoid biosynthetic process"/>
    <property type="evidence" value="ECO:0007669"/>
    <property type="project" value="InterPro"/>
</dbReference>
<dbReference type="CDD" id="cd00554">
    <property type="entry name" value="MECDP_synthase"/>
    <property type="match status" value="1"/>
</dbReference>
<dbReference type="FunFam" id="3.30.1330.50:FF:000001">
    <property type="entry name" value="2-C-methyl-D-erythritol 2,4-cyclodiphosphate synthase"/>
    <property type="match status" value="1"/>
</dbReference>
<dbReference type="Gene3D" id="3.30.1330.50">
    <property type="entry name" value="2-C-methyl-D-erythritol 2,4-cyclodiphosphate synthase"/>
    <property type="match status" value="1"/>
</dbReference>
<dbReference type="HAMAP" id="MF_00107">
    <property type="entry name" value="IspF"/>
    <property type="match status" value="1"/>
</dbReference>
<dbReference type="InterPro" id="IPR003526">
    <property type="entry name" value="MECDP_synthase"/>
</dbReference>
<dbReference type="InterPro" id="IPR020555">
    <property type="entry name" value="MECDP_synthase_CS"/>
</dbReference>
<dbReference type="InterPro" id="IPR036571">
    <property type="entry name" value="MECDP_synthase_sf"/>
</dbReference>
<dbReference type="NCBIfam" id="TIGR00151">
    <property type="entry name" value="ispF"/>
    <property type="match status" value="1"/>
</dbReference>
<dbReference type="PANTHER" id="PTHR43181">
    <property type="entry name" value="2-C-METHYL-D-ERYTHRITOL 2,4-CYCLODIPHOSPHATE SYNTHASE, CHLOROPLASTIC"/>
    <property type="match status" value="1"/>
</dbReference>
<dbReference type="PANTHER" id="PTHR43181:SF1">
    <property type="entry name" value="2-C-METHYL-D-ERYTHRITOL 2,4-CYCLODIPHOSPHATE SYNTHASE, CHLOROPLASTIC"/>
    <property type="match status" value="1"/>
</dbReference>
<dbReference type="Pfam" id="PF02542">
    <property type="entry name" value="YgbB"/>
    <property type="match status" value="1"/>
</dbReference>
<dbReference type="SUPFAM" id="SSF69765">
    <property type="entry name" value="IpsF-like"/>
    <property type="match status" value="1"/>
</dbReference>
<dbReference type="PROSITE" id="PS01350">
    <property type="entry name" value="ISPF"/>
    <property type="match status" value="1"/>
</dbReference>
<feature type="chain" id="PRO_1000022864" description="2-C-methyl-D-erythritol 2,4-cyclodiphosphate synthase">
    <location>
        <begin position="1"/>
        <end position="157"/>
    </location>
</feature>
<feature type="binding site" evidence="1">
    <location>
        <begin position="8"/>
        <end position="10"/>
    </location>
    <ligand>
        <name>4-CDP-2-C-methyl-D-erythritol 2-phosphate</name>
        <dbReference type="ChEBI" id="CHEBI:57919"/>
    </ligand>
</feature>
<feature type="binding site" evidence="1">
    <location>
        <position position="8"/>
    </location>
    <ligand>
        <name>a divalent metal cation</name>
        <dbReference type="ChEBI" id="CHEBI:60240"/>
    </ligand>
</feature>
<feature type="binding site" evidence="1">
    <location>
        <position position="10"/>
    </location>
    <ligand>
        <name>a divalent metal cation</name>
        <dbReference type="ChEBI" id="CHEBI:60240"/>
    </ligand>
</feature>
<feature type="binding site" evidence="1">
    <location>
        <begin position="34"/>
        <end position="35"/>
    </location>
    <ligand>
        <name>4-CDP-2-C-methyl-D-erythritol 2-phosphate</name>
        <dbReference type="ChEBI" id="CHEBI:57919"/>
    </ligand>
</feature>
<feature type="binding site" evidence="1">
    <location>
        <position position="42"/>
    </location>
    <ligand>
        <name>a divalent metal cation</name>
        <dbReference type="ChEBI" id="CHEBI:60240"/>
    </ligand>
</feature>
<feature type="binding site" evidence="1">
    <location>
        <begin position="56"/>
        <end position="58"/>
    </location>
    <ligand>
        <name>4-CDP-2-C-methyl-D-erythritol 2-phosphate</name>
        <dbReference type="ChEBI" id="CHEBI:57919"/>
    </ligand>
</feature>
<feature type="binding site" evidence="1">
    <location>
        <begin position="61"/>
        <end position="65"/>
    </location>
    <ligand>
        <name>4-CDP-2-C-methyl-D-erythritol 2-phosphate</name>
        <dbReference type="ChEBI" id="CHEBI:57919"/>
    </ligand>
</feature>
<feature type="binding site" evidence="1">
    <location>
        <begin position="100"/>
        <end position="106"/>
    </location>
    <ligand>
        <name>4-CDP-2-C-methyl-D-erythritol 2-phosphate</name>
        <dbReference type="ChEBI" id="CHEBI:57919"/>
    </ligand>
</feature>
<feature type="binding site" evidence="1">
    <location>
        <begin position="132"/>
        <end position="135"/>
    </location>
    <ligand>
        <name>4-CDP-2-C-methyl-D-erythritol 2-phosphate</name>
        <dbReference type="ChEBI" id="CHEBI:57919"/>
    </ligand>
</feature>
<feature type="binding site" evidence="1">
    <location>
        <position position="139"/>
    </location>
    <ligand>
        <name>4-CDP-2-C-methyl-D-erythritol 2-phosphate</name>
        <dbReference type="ChEBI" id="CHEBI:57919"/>
    </ligand>
</feature>
<feature type="binding site" evidence="1">
    <location>
        <position position="142"/>
    </location>
    <ligand>
        <name>4-CDP-2-C-methyl-D-erythritol 2-phosphate</name>
        <dbReference type="ChEBI" id="CHEBI:57919"/>
    </ligand>
</feature>
<feature type="site" description="Transition state stabilizer" evidence="1">
    <location>
        <position position="34"/>
    </location>
</feature>
<feature type="site" description="Transition state stabilizer" evidence="1">
    <location>
        <position position="133"/>
    </location>
</feature>
<name>ISPF_PSEP1</name>
<sequence>MRIGHGYDVHRFCDGDFITLGGVRIPHKYGLLAHSDGDVLLHALSDALLGAAALGDIGKHFPDTDPQFKGADSRALLRHVVGIVKAKGWKVGNVDATIVAQAPKMAPHIETMRQLIAEDLQVELDQVNVKATTTEKLGFTGREEGIAVHSVALLLPA</sequence>
<gene>
    <name evidence="1" type="primary">ispF</name>
    <name type="ordered locus">Pput_4159</name>
</gene>